<gene>
    <name evidence="4" type="primary">nur</name>
    <name evidence="8" type="ORF">CG31813</name>
</gene>
<comment type="function">
    <text evidence="3">Antimicrobial protein which is essential for the homeostatic regulation of sleep. Promotes sleep following sleep deprivation or bacterial infection and increases survival following bacterial infection. Likely to promote survival to bacterial infection in two ways; by contributing to the innate immune response and by promoting sleep during sickness to aid recovery.</text>
</comment>
<comment type="subcellular location">
    <subcellularLocation>
        <location evidence="3">Secreted</location>
    </subcellularLocation>
</comment>
<comment type="tissue specificity">
    <text evidence="3">Detected in the brain where it accumulates in the dorsal fan-shaped body following sleep deprivation (at protein level). Expressed in the adult body.</text>
</comment>
<comment type="induction">
    <text evidence="3">In the adult brain by sleep deprivation (at protein level). Up-regulated after bacterial infection in the whole adult body and in brains of some flies.</text>
</comment>
<comment type="disruption phenotype">
    <text evidence="3">Adults display disrupted sleep. Consolidation of daytime sleep is decreased, particularly in males, such that the number of bouts is increased and bout duration is decreased. Adults are more easily roused from sleep and have impaired sleep rebound, thereby recovering sleep more slowly after sleep deprivation. Mutants infected with S.marcescens or E.coli at zeitgeber time 18 (ZT18) show a significant reduction in infection-induced sleep during ZT0 to ZT2 the next morning.</text>
</comment>
<comment type="miscellaneous">
    <text evidence="4">The name 'nemuri' means sleep in Japanese.</text>
</comment>
<comment type="sequence caution" evidence="5">
    <conflict type="erroneous initiation">
        <sequence resource="EMBL-CDS" id="AAN71456"/>
    </conflict>
    <text>Extended N-terminus.</text>
</comment>
<organism evidence="9">
    <name type="scientific">Drosophila melanogaster</name>
    <name type="common">Fruit fly</name>
    <dbReference type="NCBI Taxonomy" id="7227"/>
    <lineage>
        <taxon>Eukaryota</taxon>
        <taxon>Metazoa</taxon>
        <taxon>Ecdysozoa</taxon>
        <taxon>Arthropoda</taxon>
        <taxon>Hexapoda</taxon>
        <taxon>Insecta</taxon>
        <taxon>Pterygota</taxon>
        <taxon>Neoptera</taxon>
        <taxon>Endopterygota</taxon>
        <taxon>Diptera</taxon>
        <taxon>Brachycera</taxon>
        <taxon>Muscomorpha</taxon>
        <taxon>Ephydroidea</taxon>
        <taxon>Drosophilidae</taxon>
        <taxon>Drosophila</taxon>
        <taxon>Sophophora</taxon>
    </lineage>
</organism>
<evidence type="ECO:0000255" key="1"/>
<evidence type="ECO:0000256" key="2">
    <source>
        <dbReference type="SAM" id="MobiDB-lite"/>
    </source>
</evidence>
<evidence type="ECO:0000269" key="3">
    <source>
    </source>
</evidence>
<evidence type="ECO:0000303" key="4">
    <source>
    </source>
</evidence>
<evidence type="ECO:0000305" key="5"/>
<evidence type="ECO:0000312" key="6">
    <source>
        <dbReference type="EMBL" id="AAN10843.1"/>
    </source>
</evidence>
<evidence type="ECO:0000312" key="7">
    <source>
        <dbReference type="EMBL" id="AAN71456.1"/>
    </source>
</evidence>
<evidence type="ECO:0000312" key="8">
    <source>
        <dbReference type="FlyBase" id="FBgn0051813"/>
    </source>
</evidence>
<evidence type="ECO:0000312" key="9">
    <source>
        <dbReference type="Proteomes" id="UP000000803"/>
    </source>
</evidence>
<feature type="signal peptide" evidence="1">
    <location>
        <begin position="1"/>
        <end position="25"/>
    </location>
</feature>
<feature type="chain" id="PRO_5015099179" description="Protein nemuri" evidence="1">
    <location>
        <begin position="26"/>
        <end position="172"/>
    </location>
</feature>
<feature type="region of interest" description="Disordered" evidence="2">
    <location>
        <begin position="27"/>
        <end position="172"/>
    </location>
</feature>
<feature type="coiled-coil region" evidence="1">
    <location>
        <begin position="45"/>
        <end position="74"/>
    </location>
</feature>
<feature type="compositionally biased region" description="Basic and acidic residues" evidence="2">
    <location>
        <begin position="35"/>
        <end position="50"/>
    </location>
</feature>
<feature type="compositionally biased region" description="Basic and acidic residues" evidence="2">
    <location>
        <begin position="58"/>
        <end position="90"/>
    </location>
</feature>
<feature type="compositionally biased region" description="Basic and acidic residues" evidence="2">
    <location>
        <begin position="97"/>
        <end position="108"/>
    </location>
</feature>
<feature type="compositionally biased region" description="Basic residues" evidence="2">
    <location>
        <begin position="109"/>
        <end position="172"/>
    </location>
</feature>
<name>NEMU_DROME</name>
<keyword id="KW-0044">Antibiotic</keyword>
<keyword id="KW-0929">Antimicrobial</keyword>
<keyword id="KW-0175">Coiled coil</keyword>
<keyword id="KW-0391">Immunity</keyword>
<keyword id="KW-0399">Innate immunity</keyword>
<keyword id="KW-1185">Reference proteome</keyword>
<keyword id="KW-0964">Secreted</keyword>
<keyword id="KW-0732">Signal</keyword>
<dbReference type="EMBL" id="AE014134">
    <property type="protein sequence ID" value="AAN10843.1"/>
    <property type="molecule type" value="Genomic_DNA"/>
</dbReference>
<dbReference type="EMBL" id="AE014134">
    <property type="protein sequence ID" value="AHN54420.1"/>
    <property type="molecule type" value="Genomic_DNA"/>
</dbReference>
<dbReference type="EMBL" id="BT001701">
    <property type="protein sequence ID" value="AAN71456.1"/>
    <property type="status" value="ALT_INIT"/>
    <property type="molecule type" value="mRNA"/>
</dbReference>
<dbReference type="RefSeq" id="NP_001285906.1">
    <property type="nucleotide sequence ID" value="NM_001298977.1"/>
</dbReference>
<dbReference type="RefSeq" id="NP_723832.1">
    <property type="nucleotide sequence ID" value="NM_165053.2"/>
</dbReference>
<dbReference type="FunCoup" id="Q8IP68">
    <property type="interactions" value="112"/>
</dbReference>
<dbReference type="IntAct" id="Q8IP68">
    <property type="interactions" value="2"/>
</dbReference>
<dbReference type="STRING" id="7227.FBpp0310251"/>
<dbReference type="PaxDb" id="7227-FBpp0080108"/>
<dbReference type="DNASU" id="318957"/>
<dbReference type="EnsemblMetazoa" id="FBtr0080531">
    <property type="protein sequence ID" value="FBpp0080108"/>
    <property type="gene ID" value="FBgn0051813"/>
</dbReference>
<dbReference type="EnsemblMetazoa" id="FBtr0343656">
    <property type="protein sequence ID" value="FBpp0310251"/>
    <property type="gene ID" value="FBgn0051813"/>
</dbReference>
<dbReference type="GeneID" id="318957"/>
<dbReference type="KEGG" id="dme:Dmel_CG31813"/>
<dbReference type="UCSC" id="CG31813-RA">
    <property type="organism name" value="d. melanogaster"/>
</dbReference>
<dbReference type="AGR" id="FB:FBgn0051813"/>
<dbReference type="CTD" id="318957"/>
<dbReference type="FlyBase" id="FBgn0051813">
    <property type="gene designation" value="nur"/>
</dbReference>
<dbReference type="VEuPathDB" id="VectorBase:FBgn0051813"/>
<dbReference type="eggNOG" id="ENOG502TCCG">
    <property type="taxonomic scope" value="Eukaryota"/>
</dbReference>
<dbReference type="HOGENOM" id="CLU_1556883_0_0_1"/>
<dbReference type="InParanoid" id="Q8IP68"/>
<dbReference type="OMA" id="NEHRNTA"/>
<dbReference type="OrthoDB" id="7873123at2759"/>
<dbReference type="PhylomeDB" id="Q8IP68"/>
<dbReference type="BioGRID-ORCS" id="318957">
    <property type="hits" value="0 hits in 1 CRISPR screen"/>
</dbReference>
<dbReference type="GenomeRNAi" id="318957"/>
<dbReference type="PRO" id="PR:Q8IP68"/>
<dbReference type="Proteomes" id="UP000000803">
    <property type="component" value="Chromosome 2L"/>
</dbReference>
<dbReference type="Bgee" id="FBgn0051813">
    <property type="expression patterns" value="Expressed in cleaving embryo and 7 other cell types or tissues"/>
</dbReference>
<dbReference type="GO" id="GO:0005615">
    <property type="term" value="C:extracellular space"/>
    <property type="evidence" value="ECO:0000314"/>
    <property type="project" value="FlyBase"/>
</dbReference>
<dbReference type="GO" id="GO:0019730">
    <property type="term" value="P:antimicrobial humoral response"/>
    <property type="evidence" value="ECO:0000314"/>
    <property type="project" value="FlyBase"/>
</dbReference>
<dbReference type="GO" id="GO:0042742">
    <property type="term" value="P:defense response to bacterium"/>
    <property type="evidence" value="ECO:0007669"/>
    <property type="project" value="UniProtKB-KW"/>
</dbReference>
<dbReference type="GO" id="GO:0045087">
    <property type="term" value="P:innate immune response"/>
    <property type="evidence" value="ECO:0007669"/>
    <property type="project" value="UniProtKB-KW"/>
</dbReference>
<dbReference type="GO" id="GO:0030431">
    <property type="term" value="P:sleep"/>
    <property type="evidence" value="ECO:0000315"/>
    <property type="project" value="FlyBase"/>
</dbReference>
<accession>Q8IP68</accession>
<accession>Q8IGM6</accession>
<protein>
    <recommendedName>
        <fullName evidence="6">Protein nemuri</fullName>
    </recommendedName>
</protein>
<reference evidence="9" key="1">
    <citation type="journal article" date="2000" name="Science">
        <title>The genome sequence of Drosophila melanogaster.</title>
        <authorList>
            <person name="Adams M.D."/>
            <person name="Celniker S.E."/>
            <person name="Holt R.A."/>
            <person name="Evans C.A."/>
            <person name="Gocayne J.D."/>
            <person name="Amanatides P.G."/>
            <person name="Scherer S.E."/>
            <person name="Li P.W."/>
            <person name="Hoskins R.A."/>
            <person name="Galle R.F."/>
            <person name="George R.A."/>
            <person name="Lewis S.E."/>
            <person name="Richards S."/>
            <person name="Ashburner M."/>
            <person name="Henderson S.N."/>
            <person name="Sutton G.G."/>
            <person name="Wortman J.R."/>
            <person name="Yandell M.D."/>
            <person name="Zhang Q."/>
            <person name="Chen L.X."/>
            <person name="Brandon R.C."/>
            <person name="Rogers Y.-H.C."/>
            <person name="Blazej R.G."/>
            <person name="Champe M."/>
            <person name="Pfeiffer B.D."/>
            <person name="Wan K.H."/>
            <person name="Doyle C."/>
            <person name="Baxter E.G."/>
            <person name="Helt G."/>
            <person name="Nelson C.R."/>
            <person name="Miklos G.L.G."/>
            <person name="Abril J.F."/>
            <person name="Agbayani A."/>
            <person name="An H.-J."/>
            <person name="Andrews-Pfannkoch C."/>
            <person name="Baldwin D."/>
            <person name="Ballew R.M."/>
            <person name="Basu A."/>
            <person name="Baxendale J."/>
            <person name="Bayraktaroglu L."/>
            <person name="Beasley E.M."/>
            <person name="Beeson K.Y."/>
            <person name="Benos P.V."/>
            <person name="Berman B.P."/>
            <person name="Bhandari D."/>
            <person name="Bolshakov S."/>
            <person name="Borkova D."/>
            <person name="Botchan M.R."/>
            <person name="Bouck J."/>
            <person name="Brokstein P."/>
            <person name="Brottier P."/>
            <person name="Burtis K.C."/>
            <person name="Busam D.A."/>
            <person name="Butler H."/>
            <person name="Cadieu E."/>
            <person name="Center A."/>
            <person name="Chandra I."/>
            <person name="Cherry J.M."/>
            <person name="Cawley S."/>
            <person name="Dahlke C."/>
            <person name="Davenport L.B."/>
            <person name="Davies P."/>
            <person name="de Pablos B."/>
            <person name="Delcher A."/>
            <person name="Deng Z."/>
            <person name="Mays A.D."/>
            <person name="Dew I."/>
            <person name="Dietz S.M."/>
            <person name="Dodson K."/>
            <person name="Doup L.E."/>
            <person name="Downes M."/>
            <person name="Dugan-Rocha S."/>
            <person name="Dunkov B.C."/>
            <person name="Dunn P."/>
            <person name="Durbin K.J."/>
            <person name="Evangelista C.C."/>
            <person name="Ferraz C."/>
            <person name="Ferriera S."/>
            <person name="Fleischmann W."/>
            <person name="Fosler C."/>
            <person name="Gabrielian A.E."/>
            <person name="Garg N.S."/>
            <person name="Gelbart W.M."/>
            <person name="Glasser K."/>
            <person name="Glodek A."/>
            <person name="Gong F."/>
            <person name="Gorrell J.H."/>
            <person name="Gu Z."/>
            <person name="Guan P."/>
            <person name="Harris M."/>
            <person name="Harris N.L."/>
            <person name="Harvey D.A."/>
            <person name="Heiman T.J."/>
            <person name="Hernandez J.R."/>
            <person name="Houck J."/>
            <person name="Hostin D."/>
            <person name="Houston K.A."/>
            <person name="Howland T.J."/>
            <person name="Wei M.-H."/>
            <person name="Ibegwam C."/>
            <person name="Jalali M."/>
            <person name="Kalush F."/>
            <person name="Karpen G.H."/>
            <person name="Ke Z."/>
            <person name="Kennison J.A."/>
            <person name="Ketchum K.A."/>
            <person name="Kimmel B.E."/>
            <person name="Kodira C.D."/>
            <person name="Kraft C.L."/>
            <person name="Kravitz S."/>
            <person name="Kulp D."/>
            <person name="Lai Z."/>
            <person name="Lasko P."/>
            <person name="Lei Y."/>
            <person name="Levitsky A.A."/>
            <person name="Li J.H."/>
            <person name="Li Z."/>
            <person name="Liang Y."/>
            <person name="Lin X."/>
            <person name="Liu X."/>
            <person name="Mattei B."/>
            <person name="McIntosh T.C."/>
            <person name="McLeod M.P."/>
            <person name="McPherson D."/>
            <person name="Merkulov G."/>
            <person name="Milshina N.V."/>
            <person name="Mobarry C."/>
            <person name="Morris J."/>
            <person name="Moshrefi A."/>
            <person name="Mount S.M."/>
            <person name="Moy M."/>
            <person name="Murphy B."/>
            <person name="Murphy L."/>
            <person name="Muzny D.M."/>
            <person name="Nelson D.L."/>
            <person name="Nelson D.R."/>
            <person name="Nelson K.A."/>
            <person name="Nixon K."/>
            <person name="Nusskern D.R."/>
            <person name="Pacleb J.M."/>
            <person name="Palazzolo M."/>
            <person name="Pittman G.S."/>
            <person name="Pan S."/>
            <person name="Pollard J."/>
            <person name="Puri V."/>
            <person name="Reese M.G."/>
            <person name="Reinert K."/>
            <person name="Remington K."/>
            <person name="Saunders R.D.C."/>
            <person name="Scheeler F."/>
            <person name="Shen H."/>
            <person name="Shue B.C."/>
            <person name="Siden-Kiamos I."/>
            <person name="Simpson M."/>
            <person name="Skupski M.P."/>
            <person name="Smith T.J."/>
            <person name="Spier E."/>
            <person name="Spradling A.C."/>
            <person name="Stapleton M."/>
            <person name="Strong R."/>
            <person name="Sun E."/>
            <person name="Svirskas R."/>
            <person name="Tector C."/>
            <person name="Turner R."/>
            <person name="Venter E."/>
            <person name="Wang A.H."/>
            <person name="Wang X."/>
            <person name="Wang Z.-Y."/>
            <person name="Wassarman D.A."/>
            <person name="Weinstock G.M."/>
            <person name="Weissenbach J."/>
            <person name="Williams S.M."/>
            <person name="Woodage T."/>
            <person name="Worley K.C."/>
            <person name="Wu D."/>
            <person name="Yang S."/>
            <person name="Yao Q.A."/>
            <person name="Ye J."/>
            <person name="Yeh R.-F."/>
            <person name="Zaveri J.S."/>
            <person name="Zhan M."/>
            <person name="Zhang G."/>
            <person name="Zhao Q."/>
            <person name="Zheng L."/>
            <person name="Zheng X.H."/>
            <person name="Zhong F.N."/>
            <person name="Zhong W."/>
            <person name="Zhou X."/>
            <person name="Zhu S.C."/>
            <person name="Zhu X."/>
            <person name="Smith H.O."/>
            <person name="Gibbs R.A."/>
            <person name="Myers E.W."/>
            <person name="Rubin G.M."/>
            <person name="Venter J.C."/>
        </authorList>
    </citation>
    <scope>NUCLEOTIDE SEQUENCE [LARGE SCALE GENOMIC DNA]</scope>
    <source>
        <strain evidence="9">Berkeley</strain>
    </source>
</reference>
<reference evidence="9" key="2">
    <citation type="journal article" date="2002" name="Genome Biol.">
        <title>Annotation of the Drosophila melanogaster euchromatic genome: a systematic review.</title>
        <authorList>
            <person name="Misra S."/>
            <person name="Crosby M.A."/>
            <person name="Mungall C.J."/>
            <person name="Matthews B.B."/>
            <person name="Campbell K.S."/>
            <person name="Hradecky P."/>
            <person name="Huang Y."/>
            <person name="Kaminker J.S."/>
            <person name="Millburn G.H."/>
            <person name="Prochnik S.E."/>
            <person name="Smith C.D."/>
            <person name="Tupy J.L."/>
            <person name="Whitfield E.J."/>
            <person name="Bayraktaroglu L."/>
            <person name="Berman B.P."/>
            <person name="Bettencourt B.R."/>
            <person name="Celniker S.E."/>
            <person name="de Grey A.D.N.J."/>
            <person name="Drysdale R.A."/>
            <person name="Harris N.L."/>
            <person name="Richter J."/>
            <person name="Russo S."/>
            <person name="Schroeder A.J."/>
            <person name="Shu S.Q."/>
            <person name="Stapleton M."/>
            <person name="Yamada C."/>
            <person name="Ashburner M."/>
            <person name="Gelbart W.M."/>
            <person name="Rubin G.M."/>
            <person name="Lewis S.E."/>
        </authorList>
    </citation>
    <scope>GENOME REANNOTATION</scope>
    <source>
        <strain evidence="9">Berkeley</strain>
    </source>
</reference>
<reference evidence="7" key="3">
    <citation type="journal article" date="2002" name="Genome Biol.">
        <title>A Drosophila full-length cDNA resource.</title>
        <authorList>
            <person name="Stapleton M."/>
            <person name="Carlson J.W."/>
            <person name="Brokstein P."/>
            <person name="Yu C."/>
            <person name="Champe M."/>
            <person name="George R.A."/>
            <person name="Guarin H."/>
            <person name="Kronmiller B."/>
            <person name="Pacleb J.M."/>
            <person name="Park S."/>
            <person name="Wan K.H."/>
            <person name="Rubin G.M."/>
            <person name="Celniker S.E."/>
        </authorList>
    </citation>
    <scope>NUCLEOTIDE SEQUENCE [LARGE SCALE MRNA]</scope>
    <source>
        <strain evidence="7">Berkeley</strain>
        <tissue evidence="7">Embryo</tissue>
    </source>
</reference>
<reference evidence="5" key="4">
    <citation type="journal article" date="2019" name="Science">
        <title>A sleep-inducing gene, nemuri, links sleep and immune function in Drosophila.</title>
        <authorList>
            <person name="Toda H."/>
            <person name="Williams J.A."/>
            <person name="Gulledge M."/>
            <person name="Sehgal A."/>
        </authorList>
    </citation>
    <scope>FUNCTION</scope>
    <scope>SUBCELLULAR LOCATION</scope>
    <scope>TISSUE SPECIFICITY</scope>
    <scope>INDUCTION</scope>
    <scope>DISRUPTION PHENOTYPE</scope>
</reference>
<sequence>MSAKYTLIFALAALCCLVFSTEAAAQRSRVLSSRRGSELVEKTSDNKEDSELAAQEQDLERQEQEEQNDRLEGRSDDVAEGSDNKEDKETATNNKDTIVKPNKDDARARRIVRAGRRRGGRRGGRRGGRRSARKSVRRGGRRGGRRRGGRRGRGGARRRTSVKRRSGKGNKA</sequence>
<proteinExistence type="evidence at protein level"/>